<name>MURB_CHLTR</name>
<gene>
    <name type="primary">murB</name>
    <name type="ordered locus">CT_831</name>
</gene>
<feature type="chain" id="PRO_0000179197" description="UDP-N-acetylenolpyruvoylglucosamine reductase">
    <location>
        <begin position="1"/>
        <end position="291"/>
    </location>
</feature>
<feature type="domain" description="FAD-binding PCMH-type">
    <location>
        <begin position="22"/>
        <end position="187"/>
    </location>
</feature>
<feature type="active site" evidence="1">
    <location>
        <position position="166"/>
    </location>
</feature>
<feature type="active site" description="Proton donor" evidence="1">
    <location>
        <position position="214"/>
    </location>
</feature>
<feature type="active site" evidence="1">
    <location>
        <position position="283"/>
    </location>
</feature>
<protein>
    <recommendedName>
        <fullName>UDP-N-acetylenolpyruvoylglucosamine reductase</fullName>
        <ecNumber>1.3.1.98</ecNumber>
    </recommendedName>
    <alternativeName>
        <fullName>UDP-N-acetylmuramate dehydrogenase</fullName>
    </alternativeName>
</protein>
<dbReference type="EC" id="1.3.1.98"/>
<dbReference type="EMBL" id="AE001273">
    <property type="protein sequence ID" value="AAC68428.1"/>
    <property type="molecule type" value="Genomic_DNA"/>
</dbReference>
<dbReference type="PIR" id="G71464">
    <property type="entry name" value="G71464"/>
</dbReference>
<dbReference type="RefSeq" id="NP_220352.1">
    <property type="nucleotide sequence ID" value="NC_000117.1"/>
</dbReference>
<dbReference type="RefSeq" id="WP_010725360.1">
    <property type="nucleotide sequence ID" value="NC_000117.1"/>
</dbReference>
<dbReference type="SMR" id="P0CD77"/>
<dbReference type="FunCoup" id="P0CD77">
    <property type="interactions" value="184"/>
</dbReference>
<dbReference type="STRING" id="272561.CT_831"/>
<dbReference type="EnsemblBacteria" id="AAC68428">
    <property type="protein sequence ID" value="AAC68428"/>
    <property type="gene ID" value="CT_831"/>
</dbReference>
<dbReference type="GeneID" id="884631"/>
<dbReference type="KEGG" id="ctr:CT_831"/>
<dbReference type="PATRIC" id="fig|272561.5.peg.917"/>
<dbReference type="HOGENOM" id="CLU_035304_1_1_0"/>
<dbReference type="InParanoid" id="P0CD77"/>
<dbReference type="OrthoDB" id="9804753at2"/>
<dbReference type="UniPathway" id="UPA00219"/>
<dbReference type="Proteomes" id="UP000000431">
    <property type="component" value="Chromosome"/>
</dbReference>
<dbReference type="GO" id="GO:0005829">
    <property type="term" value="C:cytosol"/>
    <property type="evidence" value="ECO:0000318"/>
    <property type="project" value="GO_Central"/>
</dbReference>
<dbReference type="GO" id="GO:0071949">
    <property type="term" value="F:FAD binding"/>
    <property type="evidence" value="ECO:0007669"/>
    <property type="project" value="InterPro"/>
</dbReference>
<dbReference type="GO" id="GO:0050660">
    <property type="term" value="F:flavin adenine dinucleotide binding"/>
    <property type="evidence" value="ECO:0000318"/>
    <property type="project" value="GO_Central"/>
</dbReference>
<dbReference type="GO" id="GO:0008762">
    <property type="term" value="F:UDP-N-acetylmuramate dehydrogenase activity"/>
    <property type="evidence" value="ECO:0000318"/>
    <property type="project" value="GO_Central"/>
</dbReference>
<dbReference type="GO" id="GO:0051301">
    <property type="term" value="P:cell division"/>
    <property type="evidence" value="ECO:0007669"/>
    <property type="project" value="UniProtKB-KW"/>
</dbReference>
<dbReference type="GO" id="GO:0071555">
    <property type="term" value="P:cell wall organization"/>
    <property type="evidence" value="ECO:0000318"/>
    <property type="project" value="GO_Central"/>
</dbReference>
<dbReference type="GO" id="GO:0009252">
    <property type="term" value="P:peptidoglycan biosynthetic process"/>
    <property type="evidence" value="ECO:0007669"/>
    <property type="project" value="UniProtKB-UniRule"/>
</dbReference>
<dbReference type="GO" id="GO:0008360">
    <property type="term" value="P:regulation of cell shape"/>
    <property type="evidence" value="ECO:0007669"/>
    <property type="project" value="UniProtKB-KW"/>
</dbReference>
<dbReference type="Gene3D" id="3.30.465.10">
    <property type="match status" value="1"/>
</dbReference>
<dbReference type="Gene3D" id="3.90.78.10">
    <property type="entry name" value="UDP-N-acetylenolpyruvoylglucosamine reductase, C-terminal domain"/>
    <property type="match status" value="1"/>
</dbReference>
<dbReference type="Gene3D" id="3.30.43.10">
    <property type="entry name" value="Uridine Diphospho-n-acetylenolpyruvylglucosamine Reductase, domain 2"/>
    <property type="match status" value="1"/>
</dbReference>
<dbReference type="HAMAP" id="MF_00037">
    <property type="entry name" value="MurB"/>
    <property type="match status" value="1"/>
</dbReference>
<dbReference type="InterPro" id="IPR016166">
    <property type="entry name" value="FAD-bd_PCMH"/>
</dbReference>
<dbReference type="InterPro" id="IPR036318">
    <property type="entry name" value="FAD-bd_PCMH-like_sf"/>
</dbReference>
<dbReference type="InterPro" id="IPR016167">
    <property type="entry name" value="FAD-bd_PCMH_sub1"/>
</dbReference>
<dbReference type="InterPro" id="IPR016169">
    <property type="entry name" value="FAD-bd_PCMH_sub2"/>
</dbReference>
<dbReference type="InterPro" id="IPR003170">
    <property type="entry name" value="MurB"/>
</dbReference>
<dbReference type="InterPro" id="IPR011601">
    <property type="entry name" value="MurB_C"/>
</dbReference>
<dbReference type="InterPro" id="IPR036635">
    <property type="entry name" value="MurB_C_sf"/>
</dbReference>
<dbReference type="InterPro" id="IPR006094">
    <property type="entry name" value="Oxid_FAD_bind_N"/>
</dbReference>
<dbReference type="NCBIfam" id="TIGR00179">
    <property type="entry name" value="murB"/>
    <property type="match status" value="1"/>
</dbReference>
<dbReference type="NCBIfam" id="NF010480">
    <property type="entry name" value="PRK13905.1"/>
    <property type="match status" value="1"/>
</dbReference>
<dbReference type="PANTHER" id="PTHR21071">
    <property type="entry name" value="UDP-N-ACETYLENOLPYRUVOYLGLUCOSAMINE REDUCTASE"/>
    <property type="match status" value="1"/>
</dbReference>
<dbReference type="PANTHER" id="PTHR21071:SF4">
    <property type="entry name" value="UDP-N-ACETYLENOLPYRUVOYLGLUCOSAMINE REDUCTASE"/>
    <property type="match status" value="1"/>
</dbReference>
<dbReference type="Pfam" id="PF01565">
    <property type="entry name" value="FAD_binding_4"/>
    <property type="match status" value="1"/>
</dbReference>
<dbReference type="Pfam" id="PF02873">
    <property type="entry name" value="MurB_C"/>
    <property type="match status" value="1"/>
</dbReference>
<dbReference type="SUPFAM" id="SSF56176">
    <property type="entry name" value="FAD-binding/transporter-associated domain-like"/>
    <property type="match status" value="1"/>
</dbReference>
<dbReference type="SUPFAM" id="SSF56194">
    <property type="entry name" value="Uridine diphospho-N-Acetylenolpyruvylglucosamine reductase, MurB, C-terminal domain"/>
    <property type="match status" value="1"/>
</dbReference>
<dbReference type="PROSITE" id="PS51387">
    <property type="entry name" value="FAD_PCMH"/>
    <property type="match status" value="1"/>
</dbReference>
<keyword id="KW-0131">Cell cycle</keyword>
<keyword id="KW-0132">Cell division</keyword>
<keyword id="KW-0133">Cell shape</keyword>
<keyword id="KW-0961">Cell wall biogenesis/degradation</keyword>
<keyword id="KW-0963">Cytoplasm</keyword>
<keyword id="KW-0274">FAD</keyword>
<keyword id="KW-0285">Flavoprotein</keyword>
<keyword id="KW-0521">NADP</keyword>
<keyword id="KW-0560">Oxidoreductase</keyword>
<keyword id="KW-0573">Peptidoglycan synthesis</keyword>
<keyword id="KW-1185">Reference proteome</keyword>
<reference key="1">
    <citation type="journal article" date="1998" name="Science">
        <title>Genome sequence of an obligate intracellular pathogen of humans: Chlamydia trachomatis.</title>
        <authorList>
            <person name="Stephens R.S."/>
            <person name="Kalman S."/>
            <person name="Lammel C.J."/>
            <person name="Fan J."/>
            <person name="Marathe R."/>
            <person name="Aravind L."/>
            <person name="Mitchell W.P."/>
            <person name="Olinger L."/>
            <person name="Tatusov R.L."/>
            <person name="Zhao Q."/>
            <person name="Koonin E.V."/>
            <person name="Davis R.W."/>
        </authorList>
    </citation>
    <scope>NUCLEOTIDE SEQUENCE [LARGE SCALE GENOMIC DNA]</scope>
    <source>
        <strain>ATCC VR-885 / DSM 19411 / UW-3/Cx</strain>
    </source>
</reference>
<evidence type="ECO:0000250" key="1"/>
<evidence type="ECO:0000305" key="2"/>
<sequence length="291" mass="31681">MTDSFPFSVQESVPLSRFSTFRIGGPARYFKELTSVSEALTVFSYLHTHPLPYIIIGKGSNCLFDDQGFDGLVLYNNIQGQEFLSDTQIKVLSGSSFALLGKRLSSQGFSGLEFAVGIPGTVGGAVFMNAGTTLANTAFSLINVEIIDHSGILLSIPREKLLFSYRTSPFQKKPAFIASATFQLTKDPQAAKRAKALIEERILKQPYEYPSAGCIFRNPEGLSAGALIDRAGLKGLKIGGGQISEKHGNFIINTGNACTADILELIEIIQKTLKKQGISLHKEVRIIPFRL</sequence>
<proteinExistence type="inferred from homology"/>
<accession>P0CD77</accession>
<accession>O84838</accession>
<accession>Q9KH24</accession>
<organism>
    <name type="scientific">Chlamydia trachomatis serovar D (strain ATCC VR-885 / DSM 19411 / UW-3/Cx)</name>
    <dbReference type="NCBI Taxonomy" id="272561"/>
    <lineage>
        <taxon>Bacteria</taxon>
        <taxon>Pseudomonadati</taxon>
        <taxon>Chlamydiota</taxon>
        <taxon>Chlamydiia</taxon>
        <taxon>Chlamydiales</taxon>
        <taxon>Chlamydiaceae</taxon>
        <taxon>Chlamydia/Chlamydophila group</taxon>
        <taxon>Chlamydia</taxon>
    </lineage>
</organism>
<comment type="function">
    <text evidence="1">Cell wall formation.</text>
</comment>
<comment type="catalytic activity">
    <reaction>
        <text>UDP-N-acetyl-alpha-D-muramate + NADP(+) = UDP-N-acetyl-3-O-(1-carboxyvinyl)-alpha-D-glucosamine + NADPH + H(+)</text>
        <dbReference type="Rhea" id="RHEA:12248"/>
        <dbReference type="ChEBI" id="CHEBI:15378"/>
        <dbReference type="ChEBI" id="CHEBI:57783"/>
        <dbReference type="ChEBI" id="CHEBI:58349"/>
        <dbReference type="ChEBI" id="CHEBI:68483"/>
        <dbReference type="ChEBI" id="CHEBI:70757"/>
        <dbReference type="EC" id="1.3.1.98"/>
    </reaction>
</comment>
<comment type="cofactor">
    <cofactor evidence="1">
        <name>FAD</name>
        <dbReference type="ChEBI" id="CHEBI:57692"/>
    </cofactor>
</comment>
<comment type="pathway">
    <text>Cell wall biogenesis; peptidoglycan biosynthesis.</text>
</comment>
<comment type="subcellular location">
    <subcellularLocation>
        <location evidence="1">Cytoplasm</location>
    </subcellularLocation>
</comment>
<comment type="similarity">
    <text evidence="2">Belongs to the MurB family.</text>
</comment>